<proteinExistence type="inferred from homology"/>
<organism>
    <name type="scientific">Pseudomonas savastanoi pv. phaseolicola (strain 1448A / Race 6)</name>
    <name type="common">Pseudomonas syringae pv. phaseolicola (strain 1448A / Race 6)</name>
    <dbReference type="NCBI Taxonomy" id="264730"/>
    <lineage>
        <taxon>Bacteria</taxon>
        <taxon>Pseudomonadati</taxon>
        <taxon>Pseudomonadota</taxon>
        <taxon>Gammaproteobacteria</taxon>
        <taxon>Pseudomonadales</taxon>
        <taxon>Pseudomonadaceae</taxon>
        <taxon>Pseudomonas</taxon>
    </lineage>
</organism>
<keyword id="KW-0998">Cell outer membrane</keyword>
<keyword id="KW-0143">Chaperone</keyword>
<keyword id="KW-0449">Lipoprotein</keyword>
<keyword id="KW-0472">Membrane</keyword>
<keyword id="KW-0564">Palmitate</keyword>
<keyword id="KW-0653">Protein transport</keyword>
<keyword id="KW-0732">Signal</keyword>
<keyword id="KW-0813">Transport</keyword>
<gene>
    <name evidence="1" type="primary">lolB</name>
    <name type="ordered locus">PSPPH_0994</name>
</gene>
<reference key="1">
    <citation type="journal article" date="2005" name="J. Bacteriol.">
        <title>Whole-genome sequence analysis of Pseudomonas syringae pv. phaseolicola 1448A reveals divergence among pathovars in genes involved in virulence and transposition.</title>
        <authorList>
            <person name="Joardar V."/>
            <person name="Lindeberg M."/>
            <person name="Jackson R.W."/>
            <person name="Selengut J."/>
            <person name="Dodson R."/>
            <person name="Brinkac L.M."/>
            <person name="Daugherty S.C."/>
            <person name="DeBoy R.T."/>
            <person name="Durkin A.S."/>
            <person name="Gwinn Giglio M."/>
            <person name="Madupu R."/>
            <person name="Nelson W.C."/>
            <person name="Rosovitz M.J."/>
            <person name="Sullivan S.A."/>
            <person name="Crabtree J."/>
            <person name="Creasy T."/>
            <person name="Davidsen T.M."/>
            <person name="Haft D.H."/>
            <person name="Zafar N."/>
            <person name="Zhou L."/>
            <person name="Halpin R."/>
            <person name="Holley T."/>
            <person name="Khouri H.M."/>
            <person name="Feldblyum T.V."/>
            <person name="White O."/>
            <person name="Fraser C.M."/>
            <person name="Chatterjee A.K."/>
            <person name="Cartinhour S."/>
            <person name="Schneider D."/>
            <person name="Mansfield J.W."/>
            <person name="Collmer A."/>
            <person name="Buell R."/>
        </authorList>
    </citation>
    <scope>NUCLEOTIDE SEQUENCE [LARGE SCALE GENOMIC DNA]</scope>
    <source>
        <strain>1448A / Race 6</strain>
    </source>
</reference>
<sequence length="205" mass="22902">MFLRHVIVFSLIALLTGCAGLTSREAVQGKGDPAQWREHKQQLSSLDGWQINGKVGIRAPKDSGSGTLFWLQRQDYYDIRLSGPLGRGAARLTGRPGAVALEVANQGRYEATTPETLLQDQLGWKLPVSHLVWWVRGLPAPDSKSSVTLDGDSRLASLEQDGWQVEYLSYVEQNGYWLPERVKLHGQDLDVTLVIKDWQPRKLGQ</sequence>
<name>LOLB_PSE14</name>
<accession>Q48MV7</accession>
<comment type="function">
    <text evidence="1">Plays a critical role in the incorporation of lipoproteins in the outer membrane after they are released by the LolA protein.</text>
</comment>
<comment type="subunit">
    <text evidence="1">Monomer.</text>
</comment>
<comment type="subcellular location">
    <subcellularLocation>
        <location evidence="1">Cell outer membrane</location>
        <topology evidence="1">Lipid-anchor</topology>
    </subcellularLocation>
</comment>
<comment type="similarity">
    <text evidence="1">Belongs to the LolB family.</text>
</comment>
<dbReference type="EMBL" id="CP000058">
    <property type="protein sequence ID" value="AAZ34582.1"/>
    <property type="molecule type" value="Genomic_DNA"/>
</dbReference>
<dbReference type="RefSeq" id="WP_011167841.1">
    <property type="nucleotide sequence ID" value="NC_005773.3"/>
</dbReference>
<dbReference type="SMR" id="Q48MV7"/>
<dbReference type="KEGG" id="psp:PSPPH_0994"/>
<dbReference type="eggNOG" id="COG3017">
    <property type="taxonomic scope" value="Bacteria"/>
</dbReference>
<dbReference type="HOGENOM" id="CLU_092816_2_1_6"/>
<dbReference type="Proteomes" id="UP000000551">
    <property type="component" value="Chromosome"/>
</dbReference>
<dbReference type="GO" id="GO:0009279">
    <property type="term" value="C:cell outer membrane"/>
    <property type="evidence" value="ECO:0007669"/>
    <property type="project" value="UniProtKB-SubCell"/>
</dbReference>
<dbReference type="GO" id="GO:0044874">
    <property type="term" value="P:lipoprotein localization to outer membrane"/>
    <property type="evidence" value="ECO:0007669"/>
    <property type="project" value="UniProtKB-UniRule"/>
</dbReference>
<dbReference type="GO" id="GO:0015031">
    <property type="term" value="P:protein transport"/>
    <property type="evidence" value="ECO:0007669"/>
    <property type="project" value="UniProtKB-KW"/>
</dbReference>
<dbReference type="CDD" id="cd16326">
    <property type="entry name" value="LolB"/>
    <property type="match status" value="1"/>
</dbReference>
<dbReference type="Gene3D" id="2.50.20.10">
    <property type="entry name" value="Lipoprotein localisation LolA/LolB/LppX"/>
    <property type="match status" value="1"/>
</dbReference>
<dbReference type="HAMAP" id="MF_00233">
    <property type="entry name" value="LolB"/>
    <property type="match status" value="1"/>
</dbReference>
<dbReference type="InterPro" id="IPR029046">
    <property type="entry name" value="LolA/LolB/LppX"/>
</dbReference>
<dbReference type="InterPro" id="IPR004565">
    <property type="entry name" value="OM_lipoprot_LolB"/>
</dbReference>
<dbReference type="NCBIfam" id="TIGR00548">
    <property type="entry name" value="lolB"/>
    <property type="match status" value="1"/>
</dbReference>
<dbReference type="Pfam" id="PF03550">
    <property type="entry name" value="LolB"/>
    <property type="match status" value="1"/>
</dbReference>
<dbReference type="SUPFAM" id="SSF89392">
    <property type="entry name" value="Prokaryotic lipoproteins and lipoprotein localization factors"/>
    <property type="match status" value="1"/>
</dbReference>
<dbReference type="PROSITE" id="PS51257">
    <property type="entry name" value="PROKAR_LIPOPROTEIN"/>
    <property type="match status" value="1"/>
</dbReference>
<feature type="signal peptide" evidence="1">
    <location>
        <begin position="1"/>
        <end position="17"/>
    </location>
</feature>
<feature type="chain" id="PRO_1000021665" description="Outer-membrane lipoprotein LolB">
    <location>
        <begin position="18"/>
        <end position="205"/>
    </location>
</feature>
<feature type="lipid moiety-binding region" description="N-palmitoyl cysteine" evidence="1">
    <location>
        <position position="18"/>
    </location>
</feature>
<feature type="lipid moiety-binding region" description="S-diacylglycerol cysteine" evidence="1">
    <location>
        <position position="18"/>
    </location>
</feature>
<evidence type="ECO:0000255" key="1">
    <source>
        <dbReference type="HAMAP-Rule" id="MF_00233"/>
    </source>
</evidence>
<protein>
    <recommendedName>
        <fullName evidence="1">Outer-membrane lipoprotein LolB</fullName>
    </recommendedName>
</protein>